<evidence type="ECO:0000255" key="1">
    <source>
        <dbReference type="HAMAP-Rule" id="MF_00187"/>
    </source>
</evidence>
<protein>
    <recommendedName>
        <fullName evidence="1">Sulfur carrier protein FdhD</fullName>
    </recommendedName>
</protein>
<organism>
    <name type="scientific">Xanthomonas axonopodis pv. citri (strain 306)</name>
    <dbReference type="NCBI Taxonomy" id="190486"/>
    <lineage>
        <taxon>Bacteria</taxon>
        <taxon>Pseudomonadati</taxon>
        <taxon>Pseudomonadota</taxon>
        <taxon>Gammaproteobacteria</taxon>
        <taxon>Lysobacterales</taxon>
        <taxon>Lysobacteraceae</taxon>
        <taxon>Xanthomonas</taxon>
    </lineage>
</organism>
<gene>
    <name evidence="1" type="primary">fdhD</name>
    <name type="synonym">fdsC</name>
    <name type="ordered locus">XAC2487</name>
</gene>
<accession>Q8PJP3</accession>
<comment type="function">
    <text evidence="1">Required for formate dehydrogenase (FDH) activity. Acts as a sulfur carrier protein that transfers sulfur from IscS to the molybdenum cofactor prior to its insertion into FDH.</text>
</comment>
<comment type="subcellular location">
    <subcellularLocation>
        <location evidence="1">Cytoplasm</location>
    </subcellularLocation>
</comment>
<comment type="similarity">
    <text evidence="1">Belongs to the FdhD family.</text>
</comment>
<feature type="chain" id="PRO_0000152931" description="Sulfur carrier protein FdhD">
    <location>
        <begin position="1"/>
        <end position="281"/>
    </location>
</feature>
<feature type="active site" description="Cysteine persulfide intermediate" evidence="1">
    <location>
        <position position="117"/>
    </location>
</feature>
<proteinExistence type="inferred from homology"/>
<keyword id="KW-0963">Cytoplasm</keyword>
<keyword id="KW-0501">Molybdenum cofactor biosynthesis</keyword>
<sequence length="281" mass="29652">MTSPSSRSVRPGSVVRTVRRHRGGRSATVQDMVAAEMPVAFIYNGVPFAVMMATPEDLEDFALGFSLSEGIVDHAQDLRVIAVETFLEGASLQIEIPPERAAALHQRRRNLDGRSGCGVCGNESIEAVLRVPPVLQSSLQIDVDALAHALDALHARQPIAAQTGAVHAAGWADAQGNVQLVREDVGRHNALDKVIGALARARIDASHGFAVVTSRASFEMAMKAAQARIPLLAAISAPTALAISLAESAGLTLIGFARDHDCVVYSHPQRLDLGVAVGEPA</sequence>
<reference key="1">
    <citation type="journal article" date="2002" name="Nature">
        <title>Comparison of the genomes of two Xanthomonas pathogens with differing host specificities.</title>
        <authorList>
            <person name="da Silva A.C.R."/>
            <person name="Ferro J.A."/>
            <person name="Reinach F.C."/>
            <person name="Farah C.S."/>
            <person name="Furlan L.R."/>
            <person name="Quaggio R.B."/>
            <person name="Monteiro-Vitorello C.B."/>
            <person name="Van Sluys M.A."/>
            <person name="Almeida N.F. Jr."/>
            <person name="Alves L.M.C."/>
            <person name="do Amaral A.M."/>
            <person name="Bertolini M.C."/>
            <person name="Camargo L.E.A."/>
            <person name="Camarotte G."/>
            <person name="Cannavan F."/>
            <person name="Cardozo J."/>
            <person name="Chambergo F."/>
            <person name="Ciapina L.P."/>
            <person name="Cicarelli R.M.B."/>
            <person name="Coutinho L.L."/>
            <person name="Cursino-Santos J.R."/>
            <person name="El-Dorry H."/>
            <person name="Faria J.B."/>
            <person name="Ferreira A.J.S."/>
            <person name="Ferreira R.C.C."/>
            <person name="Ferro M.I.T."/>
            <person name="Formighieri E.F."/>
            <person name="Franco M.C."/>
            <person name="Greggio C.C."/>
            <person name="Gruber A."/>
            <person name="Katsuyama A.M."/>
            <person name="Kishi L.T."/>
            <person name="Leite R.P."/>
            <person name="Lemos E.G.M."/>
            <person name="Lemos M.V.F."/>
            <person name="Locali E.C."/>
            <person name="Machado M.A."/>
            <person name="Madeira A.M.B.N."/>
            <person name="Martinez-Rossi N.M."/>
            <person name="Martins E.C."/>
            <person name="Meidanis J."/>
            <person name="Menck C.F.M."/>
            <person name="Miyaki C.Y."/>
            <person name="Moon D.H."/>
            <person name="Moreira L.M."/>
            <person name="Novo M.T.M."/>
            <person name="Okura V.K."/>
            <person name="Oliveira M.C."/>
            <person name="Oliveira V.R."/>
            <person name="Pereira H.A."/>
            <person name="Rossi A."/>
            <person name="Sena J.A.D."/>
            <person name="Silva C."/>
            <person name="de Souza R.F."/>
            <person name="Spinola L.A.F."/>
            <person name="Takita M.A."/>
            <person name="Tamura R.E."/>
            <person name="Teixeira E.C."/>
            <person name="Tezza R.I.D."/>
            <person name="Trindade dos Santos M."/>
            <person name="Truffi D."/>
            <person name="Tsai S.M."/>
            <person name="White F.F."/>
            <person name="Setubal J.C."/>
            <person name="Kitajima J.P."/>
        </authorList>
    </citation>
    <scope>NUCLEOTIDE SEQUENCE [LARGE SCALE GENOMIC DNA]</scope>
    <source>
        <strain>306</strain>
    </source>
</reference>
<name>FDHD_XANAC</name>
<dbReference type="EMBL" id="AE008923">
    <property type="protein sequence ID" value="AAM37338.1"/>
    <property type="molecule type" value="Genomic_DNA"/>
</dbReference>
<dbReference type="RefSeq" id="WP_005915322.1">
    <property type="nucleotide sequence ID" value="NC_003919.1"/>
</dbReference>
<dbReference type="SMR" id="Q8PJP3"/>
<dbReference type="GeneID" id="66911595"/>
<dbReference type="KEGG" id="xac:XAC2487"/>
<dbReference type="eggNOG" id="COG1526">
    <property type="taxonomic scope" value="Bacteria"/>
</dbReference>
<dbReference type="HOGENOM" id="CLU_056887_2_0_6"/>
<dbReference type="Proteomes" id="UP000000576">
    <property type="component" value="Chromosome"/>
</dbReference>
<dbReference type="GO" id="GO:0005737">
    <property type="term" value="C:cytoplasm"/>
    <property type="evidence" value="ECO:0007669"/>
    <property type="project" value="UniProtKB-SubCell"/>
</dbReference>
<dbReference type="GO" id="GO:0097163">
    <property type="term" value="F:sulfur carrier activity"/>
    <property type="evidence" value="ECO:0007669"/>
    <property type="project" value="UniProtKB-UniRule"/>
</dbReference>
<dbReference type="GO" id="GO:0016783">
    <property type="term" value="F:sulfurtransferase activity"/>
    <property type="evidence" value="ECO:0007669"/>
    <property type="project" value="InterPro"/>
</dbReference>
<dbReference type="GO" id="GO:0006777">
    <property type="term" value="P:Mo-molybdopterin cofactor biosynthetic process"/>
    <property type="evidence" value="ECO:0007669"/>
    <property type="project" value="UniProtKB-UniRule"/>
</dbReference>
<dbReference type="Gene3D" id="3.10.20.10">
    <property type="match status" value="1"/>
</dbReference>
<dbReference type="Gene3D" id="3.40.140.10">
    <property type="entry name" value="Cytidine Deaminase, domain 2"/>
    <property type="match status" value="1"/>
</dbReference>
<dbReference type="HAMAP" id="MF_00187">
    <property type="entry name" value="FdhD"/>
    <property type="match status" value="1"/>
</dbReference>
<dbReference type="InterPro" id="IPR016193">
    <property type="entry name" value="Cytidine_deaminase-like"/>
</dbReference>
<dbReference type="InterPro" id="IPR003786">
    <property type="entry name" value="FdhD"/>
</dbReference>
<dbReference type="NCBIfam" id="TIGR00129">
    <property type="entry name" value="fdhD_narQ"/>
    <property type="match status" value="1"/>
</dbReference>
<dbReference type="PANTHER" id="PTHR30592">
    <property type="entry name" value="FORMATE DEHYDROGENASE"/>
    <property type="match status" value="1"/>
</dbReference>
<dbReference type="PANTHER" id="PTHR30592:SF1">
    <property type="entry name" value="SULFUR CARRIER PROTEIN FDHD"/>
    <property type="match status" value="1"/>
</dbReference>
<dbReference type="Pfam" id="PF02634">
    <property type="entry name" value="FdhD-NarQ"/>
    <property type="match status" value="1"/>
</dbReference>
<dbReference type="PIRSF" id="PIRSF015626">
    <property type="entry name" value="FdhD"/>
    <property type="match status" value="1"/>
</dbReference>
<dbReference type="SUPFAM" id="SSF53927">
    <property type="entry name" value="Cytidine deaminase-like"/>
    <property type="match status" value="1"/>
</dbReference>